<reference key="1">
    <citation type="journal article" date="1994" name="Yeast">
        <title>The sequence of 29.7 kb from the right arm of chromosome II reveals 13 complete open reading frames, of which ten correspond to new genes.</title>
        <authorList>
            <person name="Becam A.-M."/>
            <person name="Cullin C."/>
            <person name="Grzybowska E."/>
            <person name="Lacroute F."/>
            <person name="Nasr F."/>
            <person name="Ozier-Kalogeropoulos O."/>
            <person name="Palucha A."/>
            <person name="Slonimski P.P."/>
            <person name="Zagulski M."/>
            <person name="Herbert C.J."/>
        </authorList>
    </citation>
    <scope>NUCLEOTIDE SEQUENCE [GENOMIC DNA]</scope>
    <source>
        <strain>ATCC 204508 / S288c</strain>
    </source>
</reference>
<reference key="2">
    <citation type="journal article" date="1998" name="J. Biol. Chem.">
        <title>Apg14p and Apg6/Vps30p form a protein complex essential for autophagy in the yeast, Saccharomyces cerevisiae.</title>
        <authorList>
            <person name="Kametaka S."/>
            <person name="Okano T."/>
            <person name="Ohsumi M."/>
            <person name="Ohsumi Y."/>
        </authorList>
    </citation>
    <scope>NUCLEOTIDE SEQUENCE [GENOMIC DNA]</scope>
    <scope>FUNCTION</scope>
    <scope>SUBCELLULAR LOCATION</scope>
    <scope>INTERACTION WITH VPS30</scope>
</reference>
<reference key="3">
    <citation type="journal article" date="1994" name="EMBO J.">
        <title>Complete DNA sequence of yeast chromosome II.</title>
        <authorList>
            <person name="Feldmann H."/>
            <person name="Aigle M."/>
            <person name="Aljinovic G."/>
            <person name="Andre B."/>
            <person name="Baclet M.C."/>
            <person name="Barthe C."/>
            <person name="Baur A."/>
            <person name="Becam A.-M."/>
            <person name="Biteau N."/>
            <person name="Boles E."/>
            <person name="Brandt T."/>
            <person name="Brendel M."/>
            <person name="Brueckner M."/>
            <person name="Bussereau F."/>
            <person name="Christiansen C."/>
            <person name="Contreras R."/>
            <person name="Crouzet M."/>
            <person name="Cziepluch C."/>
            <person name="Demolis N."/>
            <person name="Delaveau T."/>
            <person name="Doignon F."/>
            <person name="Domdey H."/>
            <person name="Duesterhus S."/>
            <person name="Dubois E."/>
            <person name="Dujon B."/>
            <person name="El Bakkoury M."/>
            <person name="Entian K.-D."/>
            <person name="Feuermann M."/>
            <person name="Fiers W."/>
            <person name="Fobo G.M."/>
            <person name="Fritz C."/>
            <person name="Gassenhuber J."/>
            <person name="Glansdorff N."/>
            <person name="Goffeau A."/>
            <person name="Grivell L.A."/>
            <person name="de Haan M."/>
            <person name="Hein C."/>
            <person name="Herbert C.J."/>
            <person name="Hollenberg C.P."/>
            <person name="Holmstroem K."/>
            <person name="Jacq C."/>
            <person name="Jacquet M."/>
            <person name="Jauniaux J.-C."/>
            <person name="Jonniaux J.-L."/>
            <person name="Kallesoee T."/>
            <person name="Kiesau P."/>
            <person name="Kirchrath L."/>
            <person name="Koetter P."/>
            <person name="Korol S."/>
            <person name="Liebl S."/>
            <person name="Logghe M."/>
            <person name="Lohan A.J.E."/>
            <person name="Louis E.J."/>
            <person name="Li Z.Y."/>
            <person name="Maat M.J."/>
            <person name="Mallet L."/>
            <person name="Mannhaupt G."/>
            <person name="Messenguy F."/>
            <person name="Miosga T."/>
            <person name="Molemans F."/>
            <person name="Mueller S."/>
            <person name="Nasr F."/>
            <person name="Obermaier B."/>
            <person name="Perea J."/>
            <person name="Pierard A."/>
            <person name="Piravandi E."/>
            <person name="Pohl F.M."/>
            <person name="Pohl T.M."/>
            <person name="Potier S."/>
            <person name="Proft M."/>
            <person name="Purnelle B."/>
            <person name="Ramezani Rad M."/>
            <person name="Rieger M."/>
            <person name="Rose M."/>
            <person name="Schaaff-Gerstenschlaeger I."/>
            <person name="Scherens B."/>
            <person name="Schwarzlose C."/>
            <person name="Skala J."/>
            <person name="Slonimski P.P."/>
            <person name="Smits P.H.M."/>
            <person name="Souciet J.-L."/>
            <person name="Steensma H.Y."/>
            <person name="Stucka R."/>
            <person name="Urrestarazu L.A."/>
            <person name="van der Aart Q.J.M."/>
            <person name="Van Dyck L."/>
            <person name="Vassarotti A."/>
            <person name="Vetter I."/>
            <person name="Vierendeels F."/>
            <person name="Vissers S."/>
            <person name="Wagner G."/>
            <person name="de Wergifosse P."/>
            <person name="Wolfe K.H."/>
            <person name="Zagulski M."/>
            <person name="Zimmermann F.K."/>
            <person name="Mewes H.-W."/>
            <person name="Kleine K."/>
        </authorList>
    </citation>
    <scope>NUCLEOTIDE SEQUENCE [LARGE SCALE GENOMIC DNA]</scope>
    <source>
        <strain>ATCC 204508 / S288c</strain>
    </source>
</reference>
<reference key="4">
    <citation type="journal article" date="2014" name="G3 (Bethesda)">
        <title>The reference genome sequence of Saccharomyces cerevisiae: Then and now.</title>
        <authorList>
            <person name="Engel S.R."/>
            <person name="Dietrich F.S."/>
            <person name="Fisk D.G."/>
            <person name="Binkley G."/>
            <person name="Balakrishnan R."/>
            <person name="Costanzo M.C."/>
            <person name="Dwight S.S."/>
            <person name="Hitz B.C."/>
            <person name="Karra K."/>
            <person name="Nash R.S."/>
            <person name="Weng S."/>
            <person name="Wong E.D."/>
            <person name="Lloyd P."/>
            <person name="Skrzypek M.S."/>
            <person name="Miyasato S.R."/>
            <person name="Simison M."/>
            <person name="Cherry J.M."/>
        </authorList>
    </citation>
    <scope>GENOME REANNOTATION</scope>
    <source>
        <strain>ATCC 204508 / S288c</strain>
    </source>
</reference>
<reference key="5">
    <citation type="journal article" date="2007" name="Genome Res.">
        <title>Approaching a complete repository of sequence-verified protein-encoding clones for Saccharomyces cerevisiae.</title>
        <authorList>
            <person name="Hu Y."/>
            <person name="Rolfs A."/>
            <person name="Bhullar B."/>
            <person name="Murthy T.V.S."/>
            <person name="Zhu C."/>
            <person name="Berger M.F."/>
            <person name="Camargo A.A."/>
            <person name="Kelley F."/>
            <person name="McCarron S."/>
            <person name="Jepson D."/>
            <person name="Richardson A."/>
            <person name="Raphael J."/>
            <person name="Moreira D."/>
            <person name="Taycher E."/>
            <person name="Zuo D."/>
            <person name="Mohr S."/>
            <person name="Kane M.F."/>
            <person name="Williamson J."/>
            <person name="Simpson A.J.G."/>
            <person name="Bulyk M.L."/>
            <person name="Harlow E."/>
            <person name="Marsischky G."/>
            <person name="Kolodner R.D."/>
            <person name="LaBaer J."/>
        </authorList>
    </citation>
    <scope>NUCLEOTIDE SEQUENCE [GENOMIC DNA]</scope>
    <source>
        <strain>ATCC 204508 / S288c</strain>
    </source>
</reference>
<reference key="6">
    <citation type="journal article" date="1989" name="J. Biol. Chem.">
        <title>A conserved gene encoding the 57-kDa subunit of the yeast vacuolar H+-ATPase.</title>
        <authorList>
            <person name="Nelson H."/>
            <person name="Mandiyan S."/>
            <person name="Nelson N."/>
        </authorList>
    </citation>
    <scope>NUCLEOTIDE SEQUENCE [GENOMIC DNA] OF 207-344</scope>
</reference>
<reference key="7">
    <citation type="journal article" date="1993" name="FEBS Lett.">
        <title>Isolation and characterization of autophagy-defective mutants of Saccharomyces cerevisiae.</title>
        <authorList>
            <person name="Tsukada M."/>
            <person name="Ohsumi Y."/>
        </authorList>
    </citation>
    <scope>FUNCTION</scope>
</reference>
<reference key="8">
    <citation type="journal article" date="1996" name="J. Biol. Chem.">
        <title>Genetic and phenotypic overlap between autophagy and the cytoplasm to vacuole protein targeting pathway.</title>
        <authorList>
            <person name="Harding T.M."/>
            <person name="Hefner-Gravink A."/>
            <person name="Thumm M."/>
            <person name="Klionsky D.J."/>
        </authorList>
    </citation>
    <scope>FUNCTION</scope>
</reference>
<reference key="9">
    <citation type="journal article" date="1999" name="J. Cell Sci.">
        <title>Peroxisome degradation in Saccharomyces cerevisiae is dependent on machinery of macroautophagy and the Cvt pathway.</title>
        <authorList>
            <person name="Hutchins M.U."/>
            <person name="Veenhuis M."/>
            <person name="Klionsky D.J."/>
        </authorList>
    </citation>
    <scope>FUNCTION</scope>
</reference>
<reference key="10">
    <citation type="journal article" date="2001" name="EMBO J.">
        <title>The pre-autophagosomal structure organized by concerted functions of APG genes is essential for autophagosome formation.</title>
        <authorList>
            <person name="Suzuki K."/>
            <person name="Kirisako T."/>
            <person name="Kamada Y."/>
            <person name="Mizushima N."/>
            <person name="Noda T."/>
            <person name="Ohsumi Y."/>
        </authorList>
    </citation>
    <scope>FUNCTION</scope>
</reference>
<reference key="11">
    <citation type="journal article" date="2001" name="J. Biol. Chem.">
        <title>Regulation of APG14 expression by the GATA-type transcription factor Gln3p.</title>
        <authorList>
            <person name="Chan T.F."/>
            <person name="Bertram P.G."/>
            <person name="Ai W."/>
            <person name="Zheng X.F."/>
        </authorList>
    </citation>
    <scope>INDUCTION</scope>
</reference>
<reference key="12">
    <citation type="journal article" date="2001" name="J. Biol. Chem.">
        <title>Apg2p functions in autophagosome formation on the perivacuolar structure.</title>
        <authorList>
            <person name="Shintani T."/>
            <person name="Suzuki K."/>
            <person name="Kamada Y."/>
            <person name="Noda T."/>
            <person name="Ohsumi Y."/>
        </authorList>
    </citation>
    <scope>FUNCTION</scope>
</reference>
<reference key="13">
    <citation type="journal article" date="2001" name="J. Cell Biol.">
        <title>Two distinct Vps34 phosphatidylinositol 3-kinase complexes function in autophagy and carboxypeptidase Y sorting in Saccharomyces cerevisiae.</title>
        <authorList>
            <person name="Kihara A."/>
            <person name="Noda T."/>
            <person name="Ishihara N."/>
            <person name="Ohsumi Y."/>
        </authorList>
    </citation>
    <scope>FUNCTION</scope>
    <scope>SUBCELLULAR LOCATION</scope>
    <scope>INTERACTION WITH VPS15; VPS30 AND VPS34</scope>
</reference>
<reference key="14">
    <citation type="journal article" date="2004" name="Mol. Biol. Cell">
        <title>Early stages of the secretory pathway, but not endosomes, are required for Cvt vesicle and autophagosome assembly in Saccharomyces cerevisiae.</title>
        <authorList>
            <person name="Reggiori F."/>
            <person name="Wang C.W."/>
            <person name="Nair U."/>
            <person name="Shintani T."/>
            <person name="Abeliovich H."/>
            <person name="Klionsky D.J."/>
        </authorList>
    </citation>
    <scope>FUNCTION OF THE VPS34 PI3-KINASE COMPLEX I</scope>
</reference>
<reference key="15">
    <citation type="journal article" date="2006" name="Am. J. Pathol.">
        <title>Mutant fibrinogen cleared from the endoplasmic reticulum via endoplasmic reticulum-associated protein degradation and autophagy: an explanation for liver disease.</title>
        <authorList>
            <person name="Kruse K.B."/>
            <person name="Dear A."/>
            <person name="Kaltenbrun E.R."/>
            <person name="Crum B.E."/>
            <person name="George P.M."/>
            <person name="Brennan S.O."/>
            <person name="McCracken A.A."/>
        </authorList>
    </citation>
    <scope>FUNCTION</scope>
</reference>
<reference key="16">
    <citation type="journal article" date="2006" name="Mol. Biol. Cell">
        <title>Characterization of an ERAD gene as VPS30/ATG6 reveals two alternative and functionally distinct protein quality control pathways: one for soluble Z variant of human alpha-1 proteinase inhibitor (A1PiZ) and another for aggregates of A1PiZ.</title>
        <authorList>
            <person name="Kruse K.B."/>
            <person name="Brodsky J.L."/>
            <person name="McCracken A.A."/>
        </authorList>
    </citation>
    <scope>FUNCTION</scope>
</reference>
<reference key="17">
    <citation type="journal article" date="2006" name="Mol. Biol. Cell">
        <title>Assortment of phosphatidylinositol 3-kinase complexes--Atg14p directs association of complex I to the pre-autophagosomal structure in Saccharomyces cerevisiae.</title>
        <authorList>
            <person name="Obara K."/>
            <person name="Sekito T."/>
            <person name="Ohsumi Y."/>
        </authorList>
    </citation>
    <scope>FUNCTION</scope>
    <scope>DOMAIN</scope>
    <scope>INTERACTION WITH VPS30 AND VPS34</scope>
    <scope>SUBCELLULAR LOCATION</scope>
</reference>
<reference key="18">
    <citation type="journal article" date="2008" name="Mol. Biol. Cell">
        <title>Self-interaction is critical for Atg9 transport and function at the phagophore assembly site during autophagy.</title>
        <authorList>
            <person name="He C."/>
            <person name="Baba M."/>
            <person name="Cao Y."/>
            <person name="Klionsky D.J."/>
        </authorList>
    </citation>
    <scope>SUBCELLULAR LOCATION</scope>
</reference>
<reference key="19">
    <citation type="journal article" date="2008" name="Mol. Biol. Cell">
        <title>The Atg1 kinase complex is involved in the regulation of protein recruitment to initiate sequestering vesicle formation for nonspecific autophagy in Saccharomyces cerevisiae.</title>
        <authorList>
            <person name="Cheong H."/>
            <person name="Nair U."/>
            <person name="Geng J."/>
            <person name="Klionsky D.J."/>
        </authorList>
    </citation>
    <scope>SUBCELLULAR LOCATION</scope>
</reference>
<reference key="20">
    <citation type="journal article" date="2009" name="Biochemistry">
        <title>Structure and function of Vps15 in the endosomal G protein signaling pathway.</title>
        <authorList>
            <person name="Heenan E.J."/>
            <person name="Vanhooke J.L."/>
            <person name="Temple B.R."/>
            <person name="Betts L."/>
            <person name="Sondek J.E."/>
            <person name="Dohlman H.G."/>
        </authorList>
    </citation>
    <scope>FUNCTION</scope>
    <scope>INTERACTION WITH VPS15</scope>
</reference>
<reference key="21">
    <citation type="journal article" date="2010" name="J. Cell Biol.">
        <title>An Atg9-containing compartment that functions in the early steps of autophagosome biogenesis.</title>
        <authorList>
            <person name="Mari M."/>
            <person name="Griffith J."/>
            <person name="Rieter E."/>
            <person name="Krishnappa L."/>
            <person name="Klionsky D.J."/>
            <person name="Reggiori F."/>
        </authorList>
    </citation>
    <scope>FUNCTION</scope>
</reference>
<reference key="22">
    <citation type="journal article" date="2011" name="Biochem. Biophys. Res. Commun.">
        <title>Sphingolipid synthesis is involved in autophagy in Saccharomyces cerevisiae.</title>
        <authorList>
            <person name="Yamagata M."/>
            <person name="Obara K."/>
            <person name="Kihara A."/>
        </authorList>
    </citation>
    <scope>FUNCTION</scope>
</reference>
<reference key="23">
    <citation type="journal article" date="2012" name="J. Biol. Chem.">
        <title>The Cdc48 protein and its cofactor Vms1 are involved in Cdc13 protein degradation.</title>
        <authorList>
            <person name="Baek G.H."/>
            <person name="Cheng H."/>
            <person name="Kim I."/>
            <person name="Rao H."/>
        </authorList>
    </citation>
    <scope>FUNCTION</scope>
</reference>
<reference key="24">
    <citation type="journal article" date="2012" name="J. Biol. Chem.">
        <title>Atg9 vesicles recruit vesicle-tethering proteins Trs85 and Ypt1 to the autophagosome formation site.</title>
        <authorList>
            <person name="Kakuta S."/>
            <person name="Yamamoto H."/>
            <person name="Negishi L."/>
            <person name="Kondo-Kakuta C."/>
            <person name="Hayashi N."/>
            <person name="Ohsumi Y."/>
        </authorList>
    </citation>
    <scope>SUBCELLULAR LOCATION</scope>
</reference>
<reference key="25">
    <citation type="journal article" date="2013" name="J. Cell Biol.">
        <title>Atg38 is required for autophagy-specific phosphatidylinositol 3-kinase complex integrity.</title>
        <authorList>
            <person name="Araki Y."/>
            <person name="Ku W.C."/>
            <person name="Akioka M."/>
            <person name="May A.I."/>
            <person name="Hayashi Y."/>
            <person name="Arisaka F."/>
            <person name="Ishihama Y."/>
            <person name="Ohsumi Y."/>
        </authorList>
    </citation>
    <scope>IDENTIFICATION BY MASS SPECTROMETRY</scope>
    <scope>IDENTIFICATION IN THE AUTOPHAGY-SPECIFIC VPS34 PI3-KINASE COMPLEX</scope>
    <scope>INTERACTION WITH ARG38</scope>
</reference>
<proteinExistence type="evidence at protein level"/>
<protein>
    <recommendedName>
        <fullName>Autophagy-related protein 14</fullName>
    </recommendedName>
    <alternativeName>
        <fullName>Cytoplasm to vacuole targeting protein 12</fullName>
    </alternativeName>
</protein>
<keyword id="KW-0072">Autophagy</keyword>
<keyword id="KW-0175">Coiled coil</keyword>
<keyword id="KW-0472">Membrane</keyword>
<keyword id="KW-0653">Protein transport</keyword>
<keyword id="KW-1185">Reference proteome</keyword>
<keyword id="KW-0813">Transport</keyword>
<keyword id="KW-0926">Vacuole</keyword>
<comment type="function">
    <text evidence="3 5 6 7 8 9 10 11 12 13 14 15 17 18 19">Required for cytoplasm to vacuole transport (Cvt) and autophagy as a part of the autophagy-specific VPS34 PI3-kinase complex I. This complex is essential to recruit the ATG8-phosphatidylinositol conjugate and the ATG12-ATG5 conjugate to the pre-autophagosomal structure. ATG14 mediates the specific binding of the VPS34 PI3-kinase complex I to the preautophagosomal structure (PAS).</text>
</comment>
<comment type="subunit">
    <text evidence="5 10 12 16 19">Component of the autophagy-specific VPS34 PI3-kinase complex I composed of VPS15, VPS30, VPS34, ATG14 and ATG38. Interacts directly with ATG38.</text>
</comment>
<comment type="interaction">
    <interactant intactId="EBI-2699">
        <id>P38270</id>
    </interactant>
    <interactant intactId="EBI-35873">
        <id>Q05789</id>
        <label>ATG38</label>
    </interactant>
    <organismsDiffer>false</organismsDiffer>
    <experiments>15</experiments>
</comment>
<comment type="interaction">
    <interactant intactId="EBI-2699">
        <id>P38270</id>
    </interactant>
    <interactant intactId="EBI-2670">
        <id>Q02948</id>
        <label>VPS30</label>
    </interactant>
    <organismsDiffer>false</organismsDiffer>
    <experiments>12</experiments>
</comment>
<comment type="subcellular location">
    <subcellularLocation>
        <location>Preautophagosomal structure membrane</location>
        <topology>Peripheral membrane protein</topology>
    </subcellularLocation>
    <subcellularLocation>
        <location>Vacuole membrane</location>
        <topology>Peripheral membrane protein</topology>
    </subcellularLocation>
    <text>TRS85 is required for the recruitment of ATG14 to the PAS.</text>
</comment>
<comment type="induction">
    <text evidence="4">Nitrogen starvation or rapamycin treatment rapidly causes a more than 20-fold induction of expression. The expression is dependent on GLN3.</text>
</comment>
<comment type="domain">
    <text evidence="10">Coiled-Coils at the N-terminal half are essential for interaction with VPS30 and VPS34 and autophagy.</text>
</comment>
<comment type="similarity">
    <text evidence="20">Belongs to the ATG14 family.</text>
</comment>
<gene>
    <name type="primary">ATG14</name>
    <name type="synonym">APG14</name>
    <name type="synonym">CVT12</name>
    <name type="ordered locus">YBR128C</name>
    <name type="ORF">YBR1003</name>
</gene>
<evidence type="ECO:0000250" key="1"/>
<evidence type="ECO:0000255" key="2"/>
<evidence type="ECO:0000269" key="3">
    <source>
    </source>
</evidence>
<evidence type="ECO:0000269" key="4">
    <source>
    </source>
</evidence>
<evidence type="ECO:0000269" key="5">
    <source>
    </source>
</evidence>
<evidence type="ECO:0000269" key="6">
    <source>
    </source>
</evidence>
<evidence type="ECO:0000269" key="7">
    <source>
    </source>
</evidence>
<evidence type="ECO:0000269" key="8">
    <source>
    </source>
</evidence>
<evidence type="ECO:0000269" key="9">
    <source>
    </source>
</evidence>
<evidence type="ECO:0000269" key="10">
    <source>
    </source>
</evidence>
<evidence type="ECO:0000269" key="11">
    <source>
    </source>
</evidence>
<evidence type="ECO:0000269" key="12">
    <source>
    </source>
</evidence>
<evidence type="ECO:0000269" key="13">
    <source>
    </source>
</evidence>
<evidence type="ECO:0000269" key="14">
    <source>
    </source>
</evidence>
<evidence type="ECO:0000269" key="15">
    <source>
    </source>
</evidence>
<evidence type="ECO:0000269" key="16">
    <source>
    </source>
</evidence>
<evidence type="ECO:0000269" key="17">
    <source>
    </source>
</evidence>
<evidence type="ECO:0000269" key="18">
    <source>
    </source>
</evidence>
<evidence type="ECO:0000269" key="19">
    <source>
    </source>
</evidence>
<evidence type="ECO:0000305" key="20"/>
<sequence length="344" mass="40454">MHCPICHHRAHVVYCAHCINTSPSLLLKLKLDLILLKDENKELNGKVEQILNEAMNYDQLDIKRMEKKKDPLMNSLMKLDVLRMKKNNNLIRHRIEQLNERIYSKRNHISELKVEIDNYKCYKVGTGTDKLREQVEISDAKNKLAQVSKICESARDYKLNLLNNWFVIQKLQDNFQIPFAIAFQPLISLKNFRILPLAITNDSINIMWKYISFFSDILMIKLPYTNKICEQPMFEFSDSIQTVVQRLIKLIINILQICRHLKLVPSTPMDIPWLLDQYDVDGLFYNMVKRNKMKCRSVSLYWTFGMLYSMVLDNMNNPQRGHPARRTAPPPTVTGPHDRWYVVG</sequence>
<dbReference type="EMBL" id="X75891">
    <property type="protein sequence ID" value="CAA53487.1"/>
    <property type="molecule type" value="Genomic_DNA"/>
</dbReference>
<dbReference type="EMBL" id="Z35997">
    <property type="protein sequence ID" value="CAA85085.1"/>
    <property type="molecule type" value="Genomic_DNA"/>
</dbReference>
<dbReference type="EMBL" id="AB011071">
    <property type="protein sequence ID" value="BAA32103.1"/>
    <property type="molecule type" value="Genomic_DNA"/>
</dbReference>
<dbReference type="EMBL" id="AY693167">
    <property type="protein sequence ID" value="AAT93186.1"/>
    <property type="molecule type" value="Genomic_DNA"/>
</dbReference>
<dbReference type="EMBL" id="J04450">
    <property type="protein sequence ID" value="AAA66889.1"/>
    <property type="molecule type" value="Genomic_DNA"/>
</dbReference>
<dbReference type="EMBL" id="BK006936">
    <property type="protein sequence ID" value="DAA07245.1"/>
    <property type="molecule type" value="Genomic_DNA"/>
</dbReference>
<dbReference type="PIR" id="S45997">
    <property type="entry name" value="S45997"/>
</dbReference>
<dbReference type="RefSeq" id="NP_009686.1">
    <property type="nucleotide sequence ID" value="NM_001178476.1"/>
</dbReference>
<dbReference type="SMR" id="P38270"/>
<dbReference type="BioGRID" id="32829">
    <property type="interactions" value="167"/>
</dbReference>
<dbReference type="ComplexPortal" id="CPX-1881">
    <property type="entry name" value="Phosphatidylinositol 3-kinase complex, class III, type I"/>
</dbReference>
<dbReference type="DIP" id="DIP-2741N"/>
<dbReference type="FunCoup" id="P38270">
    <property type="interactions" value="83"/>
</dbReference>
<dbReference type="IntAct" id="P38270">
    <property type="interactions" value="8"/>
</dbReference>
<dbReference type="MINT" id="P38270"/>
<dbReference type="STRING" id="4932.YBR128C"/>
<dbReference type="GlyGen" id="P38270">
    <property type="glycosylation" value="1 site"/>
</dbReference>
<dbReference type="PaxDb" id="4932-YBR128C"/>
<dbReference type="PeptideAtlas" id="P38270"/>
<dbReference type="EnsemblFungi" id="YBR128C_mRNA">
    <property type="protein sequence ID" value="YBR128C"/>
    <property type="gene ID" value="YBR128C"/>
</dbReference>
<dbReference type="GeneID" id="852425"/>
<dbReference type="KEGG" id="sce:YBR128C"/>
<dbReference type="AGR" id="SGD:S000000332"/>
<dbReference type="SGD" id="S000000332">
    <property type="gene designation" value="ATG14"/>
</dbReference>
<dbReference type="VEuPathDB" id="FungiDB:YBR128C"/>
<dbReference type="eggNOG" id="ENOG502RY86">
    <property type="taxonomic scope" value="Eukaryota"/>
</dbReference>
<dbReference type="HOGENOM" id="CLU_069448_0_0_1"/>
<dbReference type="InParanoid" id="P38270"/>
<dbReference type="OMA" id="MYCSHCI"/>
<dbReference type="OrthoDB" id="4068791at2759"/>
<dbReference type="BioCyc" id="YEAST:G3O-29083-MONOMER"/>
<dbReference type="BioGRID-ORCS" id="852425">
    <property type="hits" value="4 hits in 10 CRISPR screens"/>
</dbReference>
<dbReference type="PRO" id="PR:P38270"/>
<dbReference type="Proteomes" id="UP000002311">
    <property type="component" value="Chromosome II"/>
</dbReference>
<dbReference type="RNAct" id="P38270">
    <property type="molecule type" value="protein"/>
</dbReference>
<dbReference type="GO" id="GO:0000329">
    <property type="term" value="C:fungal-type vacuole membrane"/>
    <property type="evidence" value="ECO:0000314"/>
    <property type="project" value="SGD"/>
</dbReference>
<dbReference type="GO" id="GO:0000407">
    <property type="term" value="C:phagophore assembly site"/>
    <property type="evidence" value="ECO:0000314"/>
    <property type="project" value="SGD"/>
</dbReference>
<dbReference type="GO" id="GO:0034045">
    <property type="term" value="C:phagophore assembly site membrane"/>
    <property type="evidence" value="ECO:0000303"/>
    <property type="project" value="ComplexPortal"/>
</dbReference>
<dbReference type="GO" id="GO:0034271">
    <property type="term" value="C:phosphatidylinositol 3-kinase complex, class III, type I"/>
    <property type="evidence" value="ECO:0000314"/>
    <property type="project" value="SGD"/>
</dbReference>
<dbReference type="GO" id="GO:0120095">
    <property type="term" value="C:vacuole-isolation membrane contact site"/>
    <property type="evidence" value="ECO:0000314"/>
    <property type="project" value="SGD"/>
</dbReference>
<dbReference type="GO" id="GO:0006914">
    <property type="term" value="P:autophagy"/>
    <property type="evidence" value="ECO:0000314"/>
    <property type="project" value="ComplexPortal"/>
</dbReference>
<dbReference type="GO" id="GO:0051365">
    <property type="term" value="P:cellular response to potassium ion starvation"/>
    <property type="evidence" value="ECO:0000315"/>
    <property type="project" value="SGD"/>
</dbReference>
<dbReference type="GO" id="GO:0032258">
    <property type="term" value="P:cytoplasm to vacuole targeting by the Cvt pathway"/>
    <property type="evidence" value="ECO:0000315"/>
    <property type="project" value="SGD"/>
</dbReference>
<dbReference type="GO" id="GO:0016236">
    <property type="term" value="P:macroautophagy"/>
    <property type="evidence" value="ECO:0000315"/>
    <property type="project" value="SGD"/>
</dbReference>
<dbReference type="GO" id="GO:0000425">
    <property type="term" value="P:pexophagy"/>
    <property type="evidence" value="ECO:0000315"/>
    <property type="project" value="SGD"/>
</dbReference>
<dbReference type="GO" id="GO:0046854">
    <property type="term" value="P:phosphatidylinositol phosphate biosynthetic process"/>
    <property type="evidence" value="ECO:0000303"/>
    <property type="project" value="ComplexPortal"/>
</dbReference>
<dbReference type="GO" id="GO:0034727">
    <property type="term" value="P:piecemeal microautophagy of the nucleus"/>
    <property type="evidence" value="ECO:0000315"/>
    <property type="project" value="SGD"/>
</dbReference>
<dbReference type="InterPro" id="IPR023261">
    <property type="entry name" value="Autophagy-related_protein_14"/>
</dbReference>
<dbReference type="InterPro" id="IPR018791">
    <property type="entry name" value="UV_resistance/autophagy_Atg14"/>
</dbReference>
<dbReference type="Pfam" id="PF10186">
    <property type="entry name" value="ATG14"/>
    <property type="match status" value="1"/>
</dbReference>
<dbReference type="PRINTS" id="PR02030">
    <property type="entry name" value="AUTOPHGYRP14"/>
</dbReference>
<name>ATG14_YEAST</name>
<organism>
    <name type="scientific">Saccharomyces cerevisiae (strain ATCC 204508 / S288c)</name>
    <name type="common">Baker's yeast</name>
    <dbReference type="NCBI Taxonomy" id="559292"/>
    <lineage>
        <taxon>Eukaryota</taxon>
        <taxon>Fungi</taxon>
        <taxon>Dikarya</taxon>
        <taxon>Ascomycota</taxon>
        <taxon>Saccharomycotina</taxon>
        <taxon>Saccharomycetes</taxon>
        <taxon>Saccharomycetales</taxon>
        <taxon>Saccharomycetaceae</taxon>
        <taxon>Saccharomyces</taxon>
    </lineage>
</organism>
<feature type="chain" id="PRO_0000212453" description="Autophagy-related protein 14">
    <location>
        <begin position="1"/>
        <end position="344"/>
    </location>
</feature>
<feature type="region of interest" description="Cysteine repeats" evidence="1">
    <location>
        <begin position="3"/>
        <end position="18"/>
    </location>
</feature>
<feature type="coiled-coil region" evidence="2">
    <location>
        <begin position="25"/>
        <end position="156"/>
    </location>
</feature>
<accession>P38270</accession>
<accession>D6VQC5</accession>